<keyword id="KW-1015">Disulfide bond</keyword>
<keyword id="KW-0325">Glycoprotein</keyword>
<keyword id="KW-1043">Host membrane</keyword>
<keyword id="KW-0945">Host-virus interaction</keyword>
<keyword id="KW-0449">Lipoprotein</keyword>
<keyword id="KW-0472">Membrane</keyword>
<keyword id="KW-0564">Palmitate</keyword>
<keyword id="KW-0732">Signal</keyword>
<keyword id="KW-0812">Transmembrane</keyword>
<keyword id="KW-1133">Transmembrane helix</keyword>
<keyword id="KW-1161">Viral attachment to host cell</keyword>
<keyword id="KW-0261">Viral envelope protein</keyword>
<keyword id="KW-0946">Virion</keyword>
<keyword id="KW-1160">Virus entry into host cell</keyword>
<accession>O56677</accession>
<reference key="1">
    <citation type="journal article" date="1998" name="Virus Res.">
        <title>Structure, expression and phylogenetic analysis of the glycoprotein gene of Cocal virus.</title>
        <authorList>
            <person name="Bhella R.S."/>
            <person name="Nichol S.T."/>
            <person name="Wanas E."/>
            <person name="Ghosh H.P."/>
        </authorList>
    </citation>
    <scope>NUCLEOTIDE SEQUENCE [GENOMIC RNA]</scope>
</reference>
<sequence>MNFLLLTFIVLPLCSHAKFSIVFPQSQKGNWKNVPSSYHYCPSSSDQNWHNDLLGITMKVKMPKTHKAIQADGWMCHAAKWITTCDFRWYGPKYITHSIHSIQPTSEQCKESIKQTKQGTWMSPGFPPQNCGYATVTDSVAVVVQATPHHVLVDEYTGEWIDSQFPNGKCETEECETVHNSTVWYSDYKVTGLCDATLVDTEITFFSEDGKKESIGKPNTGYRSNYFAYEKGDKVCKMNYCKHAGVRLPSGVWFEFVDQDVYAAAKLPECPVGATISAPTQTSVDVSLILDVERILDYSLCQETWSKIRSKQPVSPVDLSYLAPKNPGTGPAFTIINGTLKYFETRYIRIDIDNPIISKMVGKISGSQTERELWTEWFPYEGVEIGPNGILKTPTGYKFPLFMIGHGMLDSDLHKTSQAEVFEHPHLAEAPKQLPEEETLFFGDTGISKNPVELIEGWFSSWKSTVVTFFFAIGVFILLYVVARIVIAVRYRYQGSNNKRIYNDIEMSRFRK</sequence>
<feature type="signal peptide" evidence="4">
    <location>
        <begin position="1"/>
        <end position="17"/>
    </location>
</feature>
<feature type="chain" id="PRO_0000287246" description="Glycoprotein">
    <location>
        <begin position="18"/>
        <end position="512"/>
    </location>
</feature>
<feature type="topological domain" description="Virion surface" evidence="4">
    <location>
        <begin position="18"/>
        <end position="468"/>
    </location>
</feature>
<feature type="transmembrane region" description="Helical" evidence="4">
    <location>
        <begin position="469"/>
        <end position="489"/>
    </location>
</feature>
<feature type="topological domain" description="Intravirion" evidence="4">
    <location>
        <begin position="490"/>
        <end position="512"/>
    </location>
</feature>
<feature type="region of interest" description="Fusion peptide" evidence="3">
    <location>
        <begin position="54"/>
        <end position="173"/>
    </location>
</feature>
<feature type="region of interest" description="Trimerization" evidence="3">
    <location>
        <begin position="260"/>
        <end position="310"/>
    </location>
</feature>
<feature type="region of interest" description="Trimerization" evidence="3">
    <location>
        <begin position="384"/>
        <end position="406"/>
    </location>
</feature>
<feature type="site" description="pH sensor in the pre-fusion state" evidence="3">
    <location>
        <position position="77"/>
    </location>
</feature>
<feature type="site" description="pH sensor in the pre-fusion state" evidence="3">
    <location>
        <position position="179"/>
    </location>
</feature>
<feature type="site" description="pH sensor in the pre-fusion state" evidence="3">
    <location>
        <position position="424"/>
    </location>
</feature>
<feature type="glycosylation site" description="N-linked (GlcNAc...) asparagine; by host" evidence="4">
    <location>
        <position position="180"/>
    </location>
</feature>
<feature type="glycosylation site" description="N-linked (GlcNAc...) asparagine; by host" evidence="4">
    <location>
        <position position="337"/>
    </location>
</feature>
<feature type="disulfide bond" evidence="1">
    <location>
        <begin position="41"/>
        <end position="301"/>
    </location>
</feature>
<feature type="disulfide bond" evidence="1">
    <location>
        <begin position="76"/>
        <end position="109"/>
    </location>
</feature>
<feature type="disulfide bond" evidence="1">
    <location>
        <begin position="85"/>
        <end position="131"/>
    </location>
</feature>
<feature type="disulfide bond" evidence="1">
    <location>
        <begin position="170"/>
        <end position="175"/>
    </location>
</feature>
<feature type="disulfide bond" evidence="1">
    <location>
        <begin position="194"/>
        <end position="241"/>
    </location>
</feature>
<feature type="disulfide bond" evidence="1">
    <location>
        <begin position="236"/>
        <end position="270"/>
    </location>
</feature>
<evidence type="ECO:0000250" key="1"/>
<evidence type="ECO:0000250" key="2">
    <source>
        <dbReference type="UniProtKB" id="P03522"/>
    </source>
</evidence>
<evidence type="ECO:0000250" key="3">
    <source>
        <dbReference type="UniProtKB" id="P0C2X0"/>
    </source>
</evidence>
<evidence type="ECO:0000255" key="4"/>
<evidence type="ECO:0000305" key="5"/>
<organism>
    <name type="scientific">Cocal virus</name>
    <name type="common">COCV</name>
    <dbReference type="NCBI Taxonomy" id="50713"/>
    <lineage>
        <taxon>Viruses</taxon>
        <taxon>Riboviria</taxon>
        <taxon>Orthornavirae</taxon>
        <taxon>Negarnaviricota</taxon>
        <taxon>Haploviricotina</taxon>
        <taxon>Monjiviricetes</taxon>
        <taxon>Mononegavirales</taxon>
        <taxon>Rhabdoviridae</taxon>
        <taxon>Alpharhabdovirinae</taxon>
        <taxon>Vesiculovirus</taxon>
        <taxon>Vesiculovirus cocal</taxon>
    </lineage>
</organism>
<gene>
    <name type="primary">G</name>
</gene>
<proteinExistence type="inferred from homology"/>
<protein>
    <recommendedName>
        <fullName>Glycoprotein</fullName>
    </recommendedName>
</protein>
<comment type="function">
    <text evidence="2">Attaches the virus to host receptors, inducing clathrin-dependent endocytosis of the virion. In the endosome, the acidic pH induces conformational changes in the glycoprotein trimer, which trigger fusion between virus and endosomal membrane.</text>
</comment>
<comment type="subunit">
    <text evidence="2">Homotrimer. Interacts with host LDL at target cell surface.</text>
</comment>
<comment type="subcellular location">
    <subcellularLocation>
        <location evidence="2">Virion membrane</location>
        <topology evidence="2">Single-pass type I membrane protein</topology>
    </subcellularLocation>
    <subcellularLocation>
        <location evidence="2">Host membrane</location>
        <topology evidence="2">Single-pass type I membrane protein</topology>
    </subcellularLocation>
</comment>
<comment type="PTM">
    <text evidence="2">Glycosylated by host. Palmitoylated by host.</text>
</comment>
<comment type="similarity">
    <text evidence="5">Belongs to the vesiculovirus glycoprotein family.</text>
</comment>
<name>GLYCO_COCAV</name>
<organismHost>
    <name type="scientific">Bos taurus</name>
    <name type="common">Bovine</name>
    <dbReference type="NCBI Taxonomy" id="9913"/>
</organismHost>
<organismHost>
    <name type="scientific">Equus caballus</name>
    <name type="common">Horse</name>
    <dbReference type="NCBI Taxonomy" id="9796"/>
</organismHost>
<organismHost>
    <name type="scientific">Insecta</name>
    <dbReference type="NCBI Taxonomy" id="50557"/>
</organismHost>
<dbReference type="EMBL" id="AF045556">
    <property type="protein sequence ID" value="AAC02712.1"/>
    <property type="molecule type" value="Genomic_RNA"/>
</dbReference>
<dbReference type="RefSeq" id="YP_009177650.1">
    <property type="nucleotide sequence ID" value="NC_028255.1"/>
</dbReference>
<dbReference type="SMR" id="O56677"/>
<dbReference type="GlyCosmos" id="O56677">
    <property type="glycosylation" value="2 sites, No reported glycans"/>
</dbReference>
<dbReference type="KEGG" id="vg:26131813"/>
<dbReference type="OrthoDB" id="21147at10239"/>
<dbReference type="GO" id="GO:0033644">
    <property type="term" value="C:host cell membrane"/>
    <property type="evidence" value="ECO:0007669"/>
    <property type="project" value="UniProtKB-SubCell"/>
</dbReference>
<dbReference type="GO" id="GO:0016020">
    <property type="term" value="C:membrane"/>
    <property type="evidence" value="ECO:0007669"/>
    <property type="project" value="UniProtKB-KW"/>
</dbReference>
<dbReference type="GO" id="GO:0019031">
    <property type="term" value="C:viral envelope"/>
    <property type="evidence" value="ECO:0007669"/>
    <property type="project" value="UniProtKB-KW"/>
</dbReference>
<dbReference type="GO" id="GO:0055036">
    <property type="term" value="C:virion membrane"/>
    <property type="evidence" value="ECO:0007669"/>
    <property type="project" value="UniProtKB-SubCell"/>
</dbReference>
<dbReference type="GO" id="GO:0046718">
    <property type="term" value="P:symbiont entry into host cell"/>
    <property type="evidence" value="ECO:0007669"/>
    <property type="project" value="UniProtKB-KW"/>
</dbReference>
<dbReference type="GO" id="GO:0019062">
    <property type="term" value="P:virion attachment to host cell"/>
    <property type="evidence" value="ECO:0007669"/>
    <property type="project" value="UniProtKB-KW"/>
</dbReference>
<dbReference type="Gene3D" id="2.30.29.130">
    <property type="match status" value="1"/>
</dbReference>
<dbReference type="Gene3D" id="2.30.30.640">
    <property type="match status" value="1"/>
</dbReference>
<dbReference type="InterPro" id="IPR055447">
    <property type="entry name" value="Rhabdo_glycop_CD"/>
</dbReference>
<dbReference type="InterPro" id="IPR001903">
    <property type="entry name" value="Rhabdo_glycop_FD"/>
</dbReference>
<dbReference type="Pfam" id="PF24833">
    <property type="entry name" value="Rhabdo_glycop_CD"/>
    <property type="match status" value="1"/>
</dbReference>
<dbReference type="Pfam" id="PF00974">
    <property type="entry name" value="Rhabdo_glycop_FD"/>
    <property type="match status" value="1"/>
</dbReference>
<dbReference type="SUPFAM" id="SSF161008">
    <property type="entry name" value="Viral glycoprotein ectodomain-like"/>
    <property type="match status" value="1"/>
</dbReference>